<proteinExistence type="evidence at protein level"/>
<feature type="chain" id="PRO_0000352503" description="ADP-ribosylation factor GTPase-activating protein AGD12">
    <location>
        <begin position="1"/>
        <end position="337"/>
    </location>
</feature>
<feature type="domain" description="Arf-GAP" evidence="2">
    <location>
        <begin position="15"/>
        <end position="137"/>
    </location>
</feature>
<feature type="domain" description="C2" evidence="1">
    <location>
        <begin position="164"/>
        <end position="281"/>
    </location>
</feature>
<feature type="zinc finger region" description="C4-type" evidence="2">
    <location>
        <begin position="30"/>
        <end position="53"/>
    </location>
</feature>
<feature type="binding site" evidence="1">
    <location>
        <position position="250"/>
    </location>
    <ligand>
        <name>Ca(2+)</name>
        <dbReference type="ChEBI" id="CHEBI:29108"/>
    </ligand>
</feature>
<feature type="binding site" evidence="1">
    <location>
        <position position="253"/>
    </location>
    <ligand>
        <name>Ca(2+)</name>
        <dbReference type="ChEBI" id="CHEBI:29108"/>
    </ligand>
</feature>
<feature type="binding site" evidence="1">
    <location>
        <position position="256"/>
    </location>
    <ligand>
        <name>Ca(2+)</name>
        <dbReference type="ChEBI" id="CHEBI:29108"/>
    </ligand>
</feature>
<feature type="mutagenesis site" description="Loss of zinc and PI-3-P binding." evidence="3">
    <original>C</original>
    <variation>S</variation>
    <location>
        <position position="33"/>
    </location>
</feature>
<feature type="sequence conflict" description="In Ref. 5; AAM65970." evidence="4" ref="5">
    <original>G</original>
    <variation>V</variation>
    <location>
        <position position="141"/>
    </location>
</feature>
<feature type="sequence conflict" description="In Ref. 6; BAF01268." evidence="4" ref="6">
    <original>A</original>
    <variation>V</variation>
    <location>
        <position position="214"/>
    </location>
</feature>
<reference key="1">
    <citation type="journal article" date="2000" name="Plant Mol. Biol.">
        <title>Promiscuous and specific phospholipid binding by domains in ZAC, a membrane-associated Arabidopsis protein with an ARF GAP zinc finger and a C2 domain.</title>
        <authorList>
            <person name="Jensen R.B."/>
            <person name="Lykke-Andersen K."/>
            <person name="Frandsen G.I."/>
            <person name="Nielsen H.B."/>
            <person name="Haseloff J."/>
            <person name="Jespersen H.M."/>
            <person name="Mundy J."/>
            <person name="Skriver K."/>
        </authorList>
    </citation>
    <scope>NUCLEOTIDE SEQUENCE [MRNA]</scope>
    <scope>MUTAGENESIS OF CYS-33</scope>
    <scope>SUBCELLULAR LOCATION</scope>
    <scope>TISSUE SPECIFICITY</scope>
    <source>
        <strain>cv. Columbia</strain>
    </source>
</reference>
<reference key="2">
    <citation type="journal article" date="1999" name="Nature">
        <title>Sequence and analysis of chromosome 4 of the plant Arabidopsis thaliana.</title>
        <authorList>
            <person name="Mayer K.F.X."/>
            <person name="Schueller C."/>
            <person name="Wambutt R."/>
            <person name="Murphy G."/>
            <person name="Volckaert G."/>
            <person name="Pohl T."/>
            <person name="Duesterhoeft A."/>
            <person name="Stiekema W."/>
            <person name="Entian K.-D."/>
            <person name="Terryn N."/>
            <person name="Harris B."/>
            <person name="Ansorge W."/>
            <person name="Brandt P."/>
            <person name="Grivell L.A."/>
            <person name="Rieger M."/>
            <person name="Weichselgartner M."/>
            <person name="de Simone V."/>
            <person name="Obermaier B."/>
            <person name="Mache R."/>
            <person name="Mueller M."/>
            <person name="Kreis M."/>
            <person name="Delseny M."/>
            <person name="Puigdomenech P."/>
            <person name="Watson M."/>
            <person name="Schmidtheini T."/>
            <person name="Reichert B."/>
            <person name="Portetelle D."/>
            <person name="Perez-Alonso M."/>
            <person name="Boutry M."/>
            <person name="Bancroft I."/>
            <person name="Vos P."/>
            <person name="Hoheisel J."/>
            <person name="Zimmermann W."/>
            <person name="Wedler H."/>
            <person name="Ridley P."/>
            <person name="Langham S.-A."/>
            <person name="McCullagh B."/>
            <person name="Bilham L."/>
            <person name="Robben J."/>
            <person name="van der Schueren J."/>
            <person name="Grymonprez B."/>
            <person name="Chuang Y.-J."/>
            <person name="Vandenbussche F."/>
            <person name="Braeken M."/>
            <person name="Weltjens I."/>
            <person name="Voet M."/>
            <person name="Bastiaens I."/>
            <person name="Aert R."/>
            <person name="Defoor E."/>
            <person name="Weitzenegger T."/>
            <person name="Bothe G."/>
            <person name="Ramsperger U."/>
            <person name="Hilbert H."/>
            <person name="Braun M."/>
            <person name="Holzer E."/>
            <person name="Brandt A."/>
            <person name="Peters S."/>
            <person name="van Staveren M."/>
            <person name="Dirkse W."/>
            <person name="Mooijman P."/>
            <person name="Klein Lankhorst R."/>
            <person name="Rose M."/>
            <person name="Hauf J."/>
            <person name="Koetter P."/>
            <person name="Berneiser S."/>
            <person name="Hempel S."/>
            <person name="Feldpausch M."/>
            <person name="Lamberth S."/>
            <person name="Van den Daele H."/>
            <person name="De Keyser A."/>
            <person name="Buysshaert C."/>
            <person name="Gielen J."/>
            <person name="Villarroel R."/>
            <person name="De Clercq R."/>
            <person name="van Montagu M."/>
            <person name="Rogers J."/>
            <person name="Cronin A."/>
            <person name="Quail M.A."/>
            <person name="Bray-Allen S."/>
            <person name="Clark L."/>
            <person name="Doggett J."/>
            <person name="Hall S."/>
            <person name="Kay M."/>
            <person name="Lennard N."/>
            <person name="McLay K."/>
            <person name="Mayes R."/>
            <person name="Pettett A."/>
            <person name="Rajandream M.A."/>
            <person name="Lyne M."/>
            <person name="Benes V."/>
            <person name="Rechmann S."/>
            <person name="Borkova D."/>
            <person name="Bloecker H."/>
            <person name="Scharfe M."/>
            <person name="Grimm M."/>
            <person name="Loehnert T.-H."/>
            <person name="Dose S."/>
            <person name="de Haan M."/>
            <person name="Maarse A.C."/>
            <person name="Schaefer M."/>
            <person name="Mueller-Auer S."/>
            <person name="Gabel C."/>
            <person name="Fuchs M."/>
            <person name="Fartmann B."/>
            <person name="Granderath K."/>
            <person name="Dauner D."/>
            <person name="Herzl A."/>
            <person name="Neumann S."/>
            <person name="Argiriou A."/>
            <person name="Vitale D."/>
            <person name="Liguori R."/>
            <person name="Piravandi E."/>
            <person name="Massenet O."/>
            <person name="Quigley F."/>
            <person name="Clabauld G."/>
            <person name="Muendlein A."/>
            <person name="Felber R."/>
            <person name="Schnabl S."/>
            <person name="Hiller R."/>
            <person name="Schmidt W."/>
            <person name="Lecharny A."/>
            <person name="Aubourg S."/>
            <person name="Chefdor F."/>
            <person name="Cooke R."/>
            <person name="Berger C."/>
            <person name="Monfort A."/>
            <person name="Casacuberta E."/>
            <person name="Gibbons T."/>
            <person name="Weber N."/>
            <person name="Vandenbol M."/>
            <person name="Bargues M."/>
            <person name="Terol J."/>
            <person name="Torres A."/>
            <person name="Perez-Perez A."/>
            <person name="Purnelle B."/>
            <person name="Bent E."/>
            <person name="Johnson S."/>
            <person name="Tacon D."/>
            <person name="Jesse T."/>
            <person name="Heijnen L."/>
            <person name="Schwarz S."/>
            <person name="Scholler P."/>
            <person name="Heber S."/>
            <person name="Francs P."/>
            <person name="Bielke C."/>
            <person name="Frishman D."/>
            <person name="Haase D."/>
            <person name="Lemcke K."/>
            <person name="Mewes H.-W."/>
            <person name="Stocker S."/>
            <person name="Zaccaria P."/>
            <person name="Bevan M."/>
            <person name="Wilson R.K."/>
            <person name="de la Bastide M."/>
            <person name="Habermann K."/>
            <person name="Parnell L."/>
            <person name="Dedhia N."/>
            <person name="Gnoj L."/>
            <person name="Schutz K."/>
            <person name="Huang E."/>
            <person name="Spiegel L."/>
            <person name="Sekhon M."/>
            <person name="Murray J."/>
            <person name="Sheet P."/>
            <person name="Cordes M."/>
            <person name="Abu-Threideh J."/>
            <person name="Stoneking T."/>
            <person name="Kalicki J."/>
            <person name="Graves T."/>
            <person name="Harmon G."/>
            <person name="Edwards J."/>
            <person name="Latreille P."/>
            <person name="Courtney L."/>
            <person name="Cloud J."/>
            <person name="Abbott A."/>
            <person name="Scott K."/>
            <person name="Johnson D."/>
            <person name="Minx P."/>
            <person name="Bentley D."/>
            <person name="Fulton B."/>
            <person name="Miller N."/>
            <person name="Greco T."/>
            <person name="Kemp K."/>
            <person name="Kramer J."/>
            <person name="Fulton L."/>
            <person name="Mardis E."/>
            <person name="Dante M."/>
            <person name="Pepin K."/>
            <person name="Hillier L.W."/>
            <person name="Nelson J."/>
            <person name="Spieth J."/>
            <person name="Ryan E."/>
            <person name="Andrews S."/>
            <person name="Geisel C."/>
            <person name="Layman D."/>
            <person name="Du H."/>
            <person name="Ali J."/>
            <person name="Berghoff A."/>
            <person name="Jones K."/>
            <person name="Drone K."/>
            <person name="Cotton M."/>
            <person name="Joshu C."/>
            <person name="Antonoiu B."/>
            <person name="Zidanic M."/>
            <person name="Strong C."/>
            <person name="Sun H."/>
            <person name="Lamar B."/>
            <person name="Yordan C."/>
            <person name="Ma P."/>
            <person name="Zhong J."/>
            <person name="Preston R."/>
            <person name="Vil D."/>
            <person name="Shekher M."/>
            <person name="Matero A."/>
            <person name="Shah R."/>
            <person name="Swaby I.K."/>
            <person name="O'Shaughnessy A."/>
            <person name="Rodriguez M."/>
            <person name="Hoffman J."/>
            <person name="Till S."/>
            <person name="Granat S."/>
            <person name="Shohdy N."/>
            <person name="Hasegawa A."/>
            <person name="Hameed A."/>
            <person name="Lodhi M."/>
            <person name="Johnson A."/>
            <person name="Chen E."/>
            <person name="Marra M.A."/>
            <person name="Martienssen R."/>
            <person name="McCombie W.R."/>
        </authorList>
    </citation>
    <scope>NUCLEOTIDE SEQUENCE [LARGE SCALE GENOMIC DNA]</scope>
    <source>
        <strain>cv. Columbia</strain>
    </source>
</reference>
<reference key="3">
    <citation type="journal article" date="2017" name="Plant J.">
        <title>Araport11: a complete reannotation of the Arabidopsis thaliana reference genome.</title>
        <authorList>
            <person name="Cheng C.Y."/>
            <person name="Krishnakumar V."/>
            <person name="Chan A.P."/>
            <person name="Thibaud-Nissen F."/>
            <person name="Schobel S."/>
            <person name="Town C.D."/>
        </authorList>
    </citation>
    <scope>GENOME REANNOTATION</scope>
    <source>
        <strain>cv. Columbia</strain>
    </source>
</reference>
<reference key="4">
    <citation type="journal article" date="2003" name="Science">
        <title>Empirical analysis of transcriptional activity in the Arabidopsis genome.</title>
        <authorList>
            <person name="Yamada K."/>
            <person name="Lim J."/>
            <person name="Dale J.M."/>
            <person name="Chen H."/>
            <person name="Shinn P."/>
            <person name="Palm C.J."/>
            <person name="Southwick A.M."/>
            <person name="Wu H.C."/>
            <person name="Kim C.J."/>
            <person name="Nguyen M."/>
            <person name="Pham P.K."/>
            <person name="Cheuk R.F."/>
            <person name="Karlin-Newmann G."/>
            <person name="Liu S.X."/>
            <person name="Lam B."/>
            <person name="Sakano H."/>
            <person name="Wu T."/>
            <person name="Yu G."/>
            <person name="Miranda M."/>
            <person name="Quach H.L."/>
            <person name="Tripp M."/>
            <person name="Chang C.H."/>
            <person name="Lee J.M."/>
            <person name="Toriumi M.J."/>
            <person name="Chan M.M."/>
            <person name="Tang C.C."/>
            <person name="Onodera C.S."/>
            <person name="Deng J.M."/>
            <person name="Akiyama K."/>
            <person name="Ansari Y."/>
            <person name="Arakawa T."/>
            <person name="Banh J."/>
            <person name="Banno F."/>
            <person name="Bowser L."/>
            <person name="Brooks S.Y."/>
            <person name="Carninci P."/>
            <person name="Chao Q."/>
            <person name="Choy N."/>
            <person name="Enju A."/>
            <person name="Goldsmith A.D."/>
            <person name="Gurjal M."/>
            <person name="Hansen N.F."/>
            <person name="Hayashizaki Y."/>
            <person name="Johnson-Hopson C."/>
            <person name="Hsuan V.W."/>
            <person name="Iida K."/>
            <person name="Karnes M."/>
            <person name="Khan S."/>
            <person name="Koesema E."/>
            <person name="Ishida J."/>
            <person name="Jiang P.X."/>
            <person name="Jones T."/>
            <person name="Kawai J."/>
            <person name="Kamiya A."/>
            <person name="Meyers C."/>
            <person name="Nakajima M."/>
            <person name="Narusaka M."/>
            <person name="Seki M."/>
            <person name="Sakurai T."/>
            <person name="Satou M."/>
            <person name="Tamse R."/>
            <person name="Vaysberg M."/>
            <person name="Wallender E.K."/>
            <person name="Wong C."/>
            <person name="Yamamura Y."/>
            <person name="Yuan S."/>
            <person name="Shinozaki K."/>
            <person name="Davis R.W."/>
            <person name="Theologis A."/>
            <person name="Ecker J.R."/>
        </authorList>
    </citation>
    <scope>NUCLEOTIDE SEQUENCE [LARGE SCALE MRNA]</scope>
    <source>
        <strain>cv. Columbia</strain>
    </source>
</reference>
<reference key="5">
    <citation type="submission" date="2002-03" db="EMBL/GenBank/DDBJ databases">
        <title>Full-length cDNA from Arabidopsis thaliana.</title>
        <authorList>
            <person name="Brover V.V."/>
            <person name="Troukhan M.E."/>
            <person name="Alexandrov N.A."/>
            <person name="Lu Y.-P."/>
            <person name="Flavell R.B."/>
            <person name="Feldmann K.A."/>
        </authorList>
    </citation>
    <scope>NUCLEOTIDE SEQUENCE [LARGE SCALE MRNA]</scope>
</reference>
<reference key="6">
    <citation type="submission" date="2006-07" db="EMBL/GenBank/DDBJ databases">
        <title>Large-scale analysis of RIKEN Arabidopsis full-length (RAFL) cDNAs.</title>
        <authorList>
            <person name="Totoki Y."/>
            <person name="Seki M."/>
            <person name="Ishida J."/>
            <person name="Nakajima M."/>
            <person name="Enju A."/>
            <person name="Kamiya A."/>
            <person name="Narusaka M."/>
            <person name="Shin-i T."/>
            <person name="Nakagawa M."/>
            <person name="Sakamoto N."/>
            <person name="Oishi K."/>
            <person name="Kohara Y."/>
            <person name="Kobayashi M."/>
            <person name="Toyoda A."/>
            <person name="Sakaki Y."/>
            <person name="Sakurai T."/>
            <person name="Iida K."/>
            <person name="Akiyama K."/>
            <person name="Satou M."/>
            <person name="Toyoda T."/>
            <person name="Konagaya A."/>
            <person name="Carninci P."/>
            <person name="Kawai J."/>
            <person name="Hayashizaki Y."/>
            <person name="Shinozaki K."/>
        </authorList>
    </citation>
    <scope>NUCLEOTIDE SEQUENCE [LARGE SCALE MRNA]</scope>
    <source>
        <strain>cv. Columbia</strain>
    </source>
</reference>
<reference key="7">
    <citation type="journal article" date="2003" name="Plant Physiol.">
        <title>Analysis of the small GTPase gene superfamily of Arabidopsis.</title>
        <authorList>
            <person name="Vernoud V."/>
            <person name="Horton A.C."/>
            <person name="Yang Z."/>
            <person name="Nielsen E."/>
        </authorList>
    </citation>
    <scope>GENE FAMILY</scope>
    <scope>NOMENCLATURE</scope>
</reference>
<reference key="8">
    <citation type="journal article" date="2009" name="Plant Physiol.">
        <title>Large-scale Arabidopsis phosphoproteome profiling reveals novel chloroplast kinase substrates and phosphorylation networks.</title>
        <authorList>
            <person name="Reiland S."/>
            <person name="Messerli G."/>
            <person name="Baerenfaller K."/>
            <person name="Gerrits B."/>
            <person name="Endler A."/>
            <person name="Grossmann J."/>
            <person name="Gruissem W."/>
            <person name="Baginsky S."/>
        </authorList>
    </citation>
    <scope>IDENTIFICATION BY MASS SPECTROMETRY [LARGE SCALE ANALYSIS]</scope>
</reference>
<comment type="function">
    <text>GTPase-activating protein (GAP) for ADP ribosylation factor (ARF). Binds phosphatidylinositol 3-monophosohate (PI-3-P) and anionic phospholipids.</text>
</comment>
<comment type="cofactor">
    <cofactor evidence="1">
        <name>Ca(2+)</name>
        <dbReference type="ChEBI" id="CHEBI:29108"/>
    </cofactor>
</comment>
<comment type="subcellular location">
    <subcellularLocation>
        <location evidence="3">Golgi apparatus</location>
    </subcellularLocation>
    <subcellularLocation>
        <location evidence="3">Cell membrane</location>
    </subcellularLocation>
</comment>
<comment type="tissue specificity">
    <text evidence="3">Expressed in roots, leaves, flowers and siliques. Low levels of expression in seeds and stems.</text>
</comment>
<comment type="domain">
    <text>The C2 domain binds anionic phospholipids promiscuously in the presence of calcium while the N-terminal region (1-174) show a specific affinity for phosphatidylinositol 3-monophosohate.</text>
</comment>
<comment type="sequence caution" evidence="4">
    <conflict type="erroneous gene model prediction">
        <sequence resource="EMBL-CDS" id="CAA17535"/>
    </conflict>
</comment>
<comment type="sequence caution" evidence="4">
    <conflict type="erroneous gene model prediction">
        <sequence resource="EMBL-CDS" id="CAB79116"/>
    </conflict>
</comment>
<accession>Q9FVJ3</accession>
<accession>O49557</accession>
<accession>Q0WNN1</accession>
<accession>Q8L9H2</accession>
<keyword id="KW-0106">Calcium</keyword>
<keyword id="KW-1003">Cell membrane</keyword>
<keyword id="KW-0333">Golgi apparatus</keyword>
<keyword id="KW-0343">GTPase activation</keyword>
<keyword id="KW-0472">Membrane</keyword>
<keyword id="KW-0479">Metal-binding</keyword>
<keyword id="KW-1185">Reference proteome</keyword>
<keyword id="KW-0862">Zinc</keyword>
<keyword id="KW-0863">Zinc-finger</keyword>
<name>AGD12_ARATH</name>
<sequence>MSYSGAGLGKPGSGKRRIRDLLTQSDNRVCADCGAPDPKWASANIGVFICLKCCGVHRSLGSHISKVLSVTLDEWSDEEVDSMIEIGGNASANSIYEAFIPEGSSKPGPDASHDQRMRFIRSKYEHQEFLKPSLRITSVRGSSTKTPAFLSSSLSKKIVDSFRTNSSSQQPQLEGMVEFIGLLKVTIKKGTNMAIRDMMSSDPYVVLTLGQQKAQSTVVKSNLNPVWNEELMLSVPHNYGSVKLQVFDYDTFSADDIMGEAEIDIQPLITSAMAFGDPEMFGDMQIGKWLKSHDNALIEDSIINIADGKVKQEVQIKLQNVESGELELEMEWLPLEQ</sequence>
<gene>
    <name type="primary">AGD12</name>
    <name type="synonym">ZAC</name>
    <name type="ordered locus">At4g21160</name>
    <name type="ORF">F7J7.100</name>
</gene>
<evidence type="ECO:0000255" key="1">
    <source>
        <dbReference type="PROSITE-ProRule" id="PRU00041"/>
    </source>
</evidence>
<evidence type="ECO:0000255" key="2">
    <source>
        <dbReference type="PROSITE-ProRule" id="PRU00288"/>
    </source>
</evidence>
<evidence type="ECO:0000269" key="3">
    <source>
    </source>
</evidence>
<evidence type="ECO:0000305" key="4"/>
<organism>
    <name type="scientific">Arabidopsis thaliana</name>
    <name type="common">Mouse-ear cress</name>
    <dbReference type="NCBI Taxonomy" id="3702"/>
    <lineage>
        <taxon>Eukaryota</taxon>
        <taxon>Viridiplantae</taxon>
        <taxon>Streptophyta</taxon>
        <taxon>Embryophyta</taxon>
        <taxon>Tracheophyta</taxon>
        <taxon>Spermatophyta</taxon>
        <taxon>Magnoliopsida</taxon>
        <taxon>eudicotyledons</taxon>
        <taxon>Gunneridae</taxon>
        <taxon>Pentapetalae</taxon>
        <taxon>rosids</taxon>
        <taxon>malvids</taxon>
        <taxon>Brassicales</taxon>
        <taxon>Brassicaceae</taxon>
        <taxon>Camelineae</taxon>
        <taxon>Arabidopsis</taxon>
    </lineage>
</organism>
<dbReference type="EMBL" id="AF177381">
    <property type="protein sequence ID" value="AAG09280.1"/>
    <property type="molecule type" value="mRNA"/>
</dbReference>
<dbReference type="EMBL" id="AL021960">
    <property type="protein sequence ID" value="CAA17535.1"/>
    <property type="status" value="ALT_SEQ"/>
    <property type="molecule type" value="Genomic_DNA"/>
</dbReference>
<dbReference type="EMBL" id="AL161554">
    <property type="protein sequence ID" value="CAB79116.1"/>
    <property type="status" value="ALT_SEQ"/>
    <property type="molecule type" value="Genomic_DNA"/>
</dbReference>
<dbReference type="EMBL" id="CP002687">
    <property type="protein sequence ID" value="AEE84411.1"/>
    <property type="molecule type" value="Genomic_DNA"/>
</dbReference>
<dbReference type="EMBL" id="CP002687">
    <property type="protein sequence ID" value="AEE84412.1"/>
    <property type="molecule type" value="Genomic_DNA"/>
</dbReference>
<dbReference type="EMBL" id="CP002687">
    <property type="protein sequence ID" value="AEE84413.1"/>
    <property type="molecule type" value="Genomic_DNA"/>
</dbReference>
<dbReference type="EMBL" id="CP002687">
    <property type="protein sequence ID" value="AEE84414.1"/>
    <property type="molecule type" value="Genomic_DNA"/>
</dbReference>
<dbReference type="EMBL" id="AY062549">
    <property type="protein sequence ID" value="AAL32627.1"/>
    <property type="molecule type" value="mRNA"/>
</dbReference>
<dbReference type="EMBL" id="BT008822">
    <property type="protein sequence ID" value="AAP68261.1"/>
    <property type="molecule type" value="mRNA"/>
</dbReference>
<dbReference type="EMBL" id="AY088434">
    <property type="protein sequence ID" value="AAM65970.1"/>
    <property type="molecule type" value="mRNA"/>
</dbReference>
<dbReference type="EMBL" id="AK229406">
    <property type="protein sequence ID" value="BAF01268.1"/>
    <property type="molecule type" value="mRNA"/>
</dbReference>
<dbReference type="PIR" id="T04947">
    <property type="entry name" value="T04947"/>
</dbReference>
<dbReference type="RefSeq" id="NP_567620.1">
    <property type="nucleotide sequence ID" value="NM_118235.4"/>
</dbReference>
<dbReference type="RefSeq" id="NP_849416.1">
    <property type="nucleotide sequence ID" value="NM_179085.3"/>
</dbReference>
<dbReference type="RefSeq" id="NP_974581.1">
    <property type="nucleotide sequence ID" value="NM_202852.2"/>
</dbReference>
<dbReference type="RefSeq" id="NP_974582.1">
    <property type="nucleotide sequence ID" value="NM_202853.3"/>
</dbReference>
<dbReference type="SMR" id="Q9FVJ3"/>
<dbReference type="BioGRID" id="13155">
    <property type="interactions" value="1"/>
</dbReference>
<dbReference type="FunCoup" id="Q9FVJ3">
    <property type="interactions" value="1151"/>
</dbReference>
<dbReference type="IntAct" id="Q9FVJ3">
    <property type="interactions" value="1"/>
</dbReference>
<dbReference type="STRING" id="3702.Q9FVJ3"/>
<dbReference type="iPTMnet" id="Q9FVJ3"/>
<dbReference type="PaxDb" id="3702-AT4G21160.3"/>
<dbReference type="ProteomicsDB" id="244695"/>
<dbReference type="EnsemblPlants" id="AT4G21160.1">
    <property type="protein sequence ID" value="AT4G21160.1"/>
    <property type="gene ID" value="AT4G21160"/>
</dbReference>
<dbReference type="EnsemblPlants" id="AT4G21160.2">
    <property type="protein sequence ID" value="AT4G21160.2"/>
    <property type="gene ID" value="AT4G21160"/>
</dbReference>
<dbReference type="EnsemblPlants" id="AT4G21160.3">
    <property type="protein sequence ID" value="AT4G21160.3"/>
    <property type="gene ID" value="AT4G21160"/>
</dbReference>
<dbReference type="EnsemblPlants" id="AT4G21160.4">
    <property type="protein sequence ID" value="AT4G21160.4"/>
    <property type="gene ID" value="AT4G21160"/>
</dbReference>
<dbReference type="GeneID" id="827864"/>
<dbReference type="Gramene" id="AT4G21160.1">
    <property type="protein sequence ID" value="AT4G21160.1"/>
    <property type="gene ID" value="AT4G21160"/>
</dbReference>
<dbReference type="Gramene" id="AT4G21160.2">
    <property type="protein sequence ID" value="AT4G21160.2"/>
    <property type="gene ID" value="AT4G21160"/>
</dbReference>
<dbReference type="Gramene" id="AT4G21160.3">
    <property type="protein sequence ID" value="AT4G21160.3"/>
    <property type="gene ID" value="AT4G21160"/>
</dbReference>
<dbReference type="Gramene" id="AT4G21160.4">
    <property type="protein sequence ID" value="AT4G21160.4"/>
    <property type="gene ID" value="AT4G21160"/>
</dbReference>
<dbReference type="KEGG" id="ath:AT4G21160"/>
<dbReference type="Araport" id="AT4G21160"/>
<dbReference type="TAIR" id="AT4G21160">
    <property type="gene designation" value="ZAC"/>
</dbReference>
<dbReference type="eggNOG" id="KOG0703">
    <property type="taxonomic scope" value="Eukaryota"/>
</dbReference>
<dbReference type="eggNOG" id="KOG1030">
    <property type="taxonomic scope" value="Eukaryota"/>
</dbReference>
<dbReference type="HOGENOM" id="CLU_045472_0_1_1"/>
<dbReference type="InParanoid" id="Q9FVJ3"/>
<dbReference type="OMA" id="EHYGQMK"/>
<dbReference type="PhylomeDB" id="Q9FVJ3"/>
<dbReference type="PRO" id="PR:Q9FVJ3"/>
<dbReference type="Proteomes" id="UP000006548">
    <property type="component" value="Chromosome 4"/>
</dbReference>
<dbReference type="ExpressionAtlas" id="Q9FVJ3">
    <property type="expression patterns" value="baseline and differential"/>
</dbReference>
<dbReference type="GO" id="GO:0005794">
    <property type="term" value="C:Golgi apparatus"/>
    <property type="evidence" value="ECO:0000314"/>
    <property type="project" value="TAIR"/>
</dbReference>
<dbReference type="GO" id="GO:0000325">
    <property type="term" value="C:plant-type vacuole"/>
    <property type="evidence" value="ECO:0007005"/>
    <property type="project" value="TAIR"/>
</dbReference>
<dbReference type="GO" id="GO:0005886">
    <property type="term" value="C:plasma membrane"/>
    <property type="evidence" value="ECO:0000314"/>
    <property type="project" value="TAIR"/>
</dbReference>
<dbReference type="GO" id="GO:0005096">
    <property type="term" value="F:GTPase activator activity"/>
    <property type="evidence" value="ECO:0000314"/>
    <property type="project" value="TAIR"/>
</dbReference>
<dbReference type="GO" id="GO:0005543">
    <property type="term" value="F:phospholipid binding"/>
    <property type="evidence" value="ECO:0000314"/>
    <property type="project" value="TAIR"/>
</dbReference>
<dbReference type="GO" id="GO:0008270">
    <property type="term" value="F:zinc ion binding"/>
    <property type="evidence" value="ECO:0007669"/>
    <property type="project" value="UniProtKB-KW"/>
</dbReference>
<dbReference type="GO" id="GO:0006886">
    <property type="term" value="P:intracellular protein transport"/>
    <property type="evidence" value="ECO:0000304"/>
    <property type="project" value="TAIR"/>
</dbReference>
<dbReference type="CDD" id="cd08204">
    <property type="entry name" value="ArfGap"/>
    <property type="match status" value="1"/>
</dbReference>
<dbReference type="CDD" id="cd04038">
    <property type="entry name" value="C2_ArfGAP"/>
    <property type="match status" value="1"/>
</dbReference>
<dbReference type="FunFam" id="2.60.40.150:FF:000190">
    <property type="entry name" value="ADP-ribosylation factor GTPase-activating protein AGD12"/>
    <property type="match status" value="1"/>
</dbReference>
<dbReference type="FunFam" id="1.10.220.150:FF:000011">
    <property type="entry name" value="Arf-GAP with dual PH domain-containing protein 1"/>
    <property type="match status" value="1"/>
</dbReference>
<dbReference type="Gene3D" id="1.10.220.150">
    <property type="entry name" value="Arf GTPase activating protein"/>
    <property type="match status" value="1"/>
</dbReference>
<dbReference type="Gene3D" id="2.60.40.150">
    <property type="entry name" value="C2 domain"/>
    <property type="match status" value="1"/>
</dbReference>
<dbReference type="InterPro" id="IPR044518">
    <property type="entry name" value="ARF_GAP_AGD11/12/13"/>
</dbReference>
<dbReference type="InterPro" id="IPR037278">
    <property type="entry name" value="ARFGAP/RecO"/>
</dbReference>
<dbReference type="InterPro" id="IPR001164">
    <property type="entry name" value="ArfGAP_dom"/>
</dbReference>
<dbReference type="InterPro" id="IPR038508">
    <property type="entry name" value="ArfGAP_dom_sf"/>
</dbReference>
<dbReference type="InterPro" id="IPR000008">
    <property type="entry name" value="C2_dom"/>
</dbReference>
<dbReference type="InterPro" id="IPR035892">
    <property type="entry name" value="C2_domain_sf"/>
</dbReference>
<dbReference type="PANTHER" id="PTHR46220">
    <property type="entry name" value="ADP-RIBOSYLATION FACTOR GTPASE-ACTIVATING PROTEIN AGD12"/>
    <property type="match status" value="1"/>
</dbReference>
<dbReference type="PANTHER" id="PTHR46220:SF1">
    <property type="entry name" value="ADP-RIBOSYLATION FACTOR GTPASE-ACTIVATING PROTEIN AGD12"/>
    <property type="match status" value="1"/>
</dbReference>
<dbReference type="Pfam" id="PF01412">
    <property type="entry name" value="ArfGap"/>
    <property type="match status" value="1"/>
</dbReference>
<dbReference type="Pfam" id="PF00168">
    <property type="entry name" value="C2"/>
    <property type="match status" value="1"/>
</dbReference>
<dbReference type="PRINTS" id="PR00405">
    <property type="entry name" value="REVINTRACTNG"/>
</dbReference>
<dbReference type="SMART" id="SM00105">
    <property type="entry name" value="ArfGap"/>
    <property type="match status" value="1"/>
</dbReference>
<dbReference type="SMART" id="SM00239">
    <property type="entry name" value="C2"/>
    <property type="match status" value="1"/>
</dbReference>
<dbReference type="SUPFAM" id="SSF57863">
    <property type="entry name" value="ArfGap/RecO-like zinc finger"/>
    <property type="match status" value="1"/>
</dbReference>
<dbReference type="SUPFAM" id="SSF49562">
    <property type="entry name" value="C2 domain (Calcium/lipid-binding domain, CaLB)"/>
    <property type="match status" value="1"/>
</dbReference>
<dbReference type="PROSITE" id="PS50115">
    <property type="entry name" value="ARFGAP"/>
    <property type="match status" value="1"/>
</dbReference>
<dbReference type="PROSITE" id="PS50004">
    <property type="entry name" value="C2"/>
    <property type="match status" value="1"/>
</dbReference>
<protein>
    <recommendedName>
        <fullName>ADP-ribosylation factor GTPase-activating protein AGD12</fullName>
        <shortName>ARF GAP AGD12</shortName>
    </recommendedName>
    <alternativeName>
        <fullName>Protein ARF-GAP DOMAIN 12</fullName>
        <shortName>AtAGD12</shortName>
    </alternativeName>
    <alternativeName>
        <fullName>Zinc- and calcium-binding protein</fullName>
        <shortName>AtZAC</shortName>
    </alternativeName>
</protein>